<organism>
    <name type="scientific">Pseudomonas savastanoi pv. phaseolicola (strain 1448A / Race 6)</name>
    <name type="common">Pseudomonas syringae pv. phaseolicola (strain 1448A / Race 6)</name>
    <dbReference type="NCBI Taxonomy" id="264730"/>
    <lineage>
        <taxon>Bacteria</taxon>
        <taxon>Pseudomonadati</taxon>
        <taxon>Pseudomonadota</taxon>
        <taxon>Gammaproteobacteria</taxon>
        <taxon>Pseudomonadales</taxon>
        <taxon>Pseudomonadaceae</taxon>
        <taxon>Pseudomonas</taxon>
    </lineage>
</organism>
<evidence type="ECO:0000255" key="1">
    <source>
        <dbReference type="HAMAP-Rule" id="MF_01454"/>
    </source>
</evidence>
<evidence type="ECO:0000255" key="2">
    <source>
        <dbReference type="PROSITE-ProRule" id="PRU01231"/>
    </source>
</evidence>
<evidence type="ECO:0000256" key="3">
    <source>
        <dbReference type="SAM" id="MobiDB-lite"/>
    </source>
</evidence>
<proteinExistence type="inferred from homology"/>
<protein>
    <recommendedName>
        <fullName evidence="1">GTPase Obg</fullName>
        <ecNumber evidence="1">3.6.5.-</ecNumber>
    </recommendedName>
    <alternativeName>
        <fullName evidence="1">GTP-binding protein Obg</fullName>
    </alternativeName>
</protein>
<dbReference type="EC" id="3.6.5.-" evidence="1"/>
<dbReference type="EMBL" id="CP000058">
    <property type="protein sequence ID" value="AAZ37743.1"/>
    <property type="molecule type" value="Genomic_DNA"/>
</dbReference>
<dbReference type="SMR" id="Q48NL2"/>
<dbReference type="KEGG" id="psp:PSPPH_0715"/>
<dbReference type="eggNOG" id="COG0536">
    <property type="taxonomic scope" value="Bacteria"/>
</dbReference>
<dbReference type="HOGENOM" id="CLU_011747_2_0_6"/>
<dbReference type="Proteomes" id="UP000000551">
    <property type="component" value="Chromosome"/>
</dbReference>
<dbReference type="GO" id="GO:0005737">
    <property type="term" value="C:cytoplasm"/>
    <property type="evidence" value="ECO:0007669"/>
    <property type="project" value="UniProtKB-SubCell"/>
</dbReference>
<dbReference type="GO" id="GO:0005525">
    <property type="term" value="F:GTP binding"/>
    <property type="evidence" value="ECO:0007669"/>
    <property type="project" value="UniProtKB-UniRule"/>
</dbReference>
<dbReference type="GO" id="GO:0003924">
    <property type="term" value="F:GTPase activity"/>
    <property type="evidence" value="ECO:0007669"/>
    <property type="project" value="UniProtKB-UniRule"/>
</dbReference>
<dbReference type="GO" id="GO:0000287">
    <property type="term" value="F:magnesium ion binding"/>
    <property type="evidence" value="ECO:0007669"/>
    <property type="project" value="InterPro"/>
</dbReference>
<dbReference type="GO" id="GO:0042254">
    <property type="term" value="P:ribosome biogenesis"/>
    <property type="evidence" value="ECO:0007669"/>
    <property type="project" value="UniProtKB-UniRule"/>
</dbReference>
<dbReference type="CDD" id="cd01898">
    <property type="entry name" value="Obg"/>
    <property type="match status" value="1"/>
</dbReference>
<dbReference type="FunFam" id="2.70.210.12:FF:000001">
    <property type="entry name" value="GTPase Obg"/>
    <property type="match status" value="1"/>
</dbReference>
<dbReference type="FunFam" id="3.40.50.300:FF:000185">
    <property type="entry name" value="GTPase Obg"/>
    <property type="match status" value="1"/>
</dbReference>
<dbReference type="Gene3D" id="2.70.210.12">
    <property type="entry name" value="GTP1/OBG domain"/>
    <property type="match status" value="1"/>
</dbReference>
<dbReference type="Gene3D" id="3.40.50.300">
    <property type="entry name" value="P-loop containing nucleotide triphosphate hydrolases"/>
    <property type="match status" value="1"/>
</dbReference>
<dbReference type="HAMAP" id="MF_01454">
    <property type="entry name" value="GTPase_Obg"/>
    <property type="match status" value="1"/>
</dbReference>
<dbReference type="InterPro" id="IPR031167">
    <property type="entry name" value="G_OBG"/>
</dbReference>
<dbReference type="InterPro" id="IPR006073">
    <property type="entry name" value="GTP-bd"/>
</dbReference>
<dbReference type="InterPro" id="IPR014100">
    <property type="entry name" value="GTP-bd_Obg/CgtA"/>
</dbReference>
<dbReference type="InterPro" id="IPR006074">
    <property type="entry name" value="GTP1-OBG_CS"/>
</dbReference>
<dbReference type="InterPro" id="IPR006169">
    <property type="entry name" value="GTP1_OBG_dom"/>
</dbReference>
<dbReference type="InterPro" id="IPR036726">
    <property type="entry name" value="GTP1_OBG_dom_sf"/>
</dbReference>
<dbReference type="InterPro" id="IPR045086">
    <property type="entry name" value="OBG_GTPase"/>
</dbReference>
<dbReference type="InterPro" id="IPR027417">
    <property type="entry name" value="P-loop_NTPase"/>
</dbReference>
<dbReference type="NCBIfam" id="TIGR02729">
    <property type="entry name" value="Obg_CgtA"/>
    <property type="match status" value="1"/>
</dbReference>
<dbReference type="NCBIfam" id="NF008955">
    <property type="entry name" value="PRK12297.1"/>
    <property type="match status" value="1"/>
</dbReference>
<dbReference type="NCBIfam" id="NF008956">
    <property type="entry name" value="PRK12299.1"/>
    <property type="match status" value="1"/>
</dbReference>
<dbReference type="PANTHER" id="PTHR11702">
    <property type="entry name" value="DEVELOPMENTALLY REGULATED GTP-BINDING PROTEIN-RELATED"/>
    <property type="match status" value="1"/>
</dbReference>
<dbReference type="PANTHER" id="PTHR11702:SF31">
    <property type="entry name" value="MITOCHONDRIAL RIBOSOME-ASSOCIATED GTPASE 2"/>
    <property type="match status" value="1"/>
</dbReference>
<dbReference type="Pfam" id="PF01018">
    <property type="entry name" value="GTP1_OBG"/>
    <property type="match status" value="1"/>
</dbReference>
<dbReference type="Pfam" id="PF01926">
    <property type="entry name" value="MMR_HSR1"/>
    <property type="match status" value="1"/>
</dbReference>
<dbReference type="PIRSF" id="PIRSF002401">
    <property type="entry name" value="GTP_bd_Obg/CgtA"/>
    <property type="match status" value="1"/>
</dbReference>
<dbReference type="PRINTS" id="PR00326">
    <property type="entry name" value="GTP1OBG"/>
</dbReference>
<dbReference type="SUPFAM" id="SSF82051">
    <property type="entry name" value="Obg GTP-binding protein N-terminal domain"/>
    <property type="match status" value="1"/>
</dbReference>
<dbReference type="SUPFAM" id="SSF52540">
    <property type="entry name" value="P-loop containing nucleoside triphosphate hydrolases"/>
    <property type="match status" value="1"/>
</dbReference>
<dbReference type="PROSITE" id="PS51710">
    <property type="entry name" value="G_OBG"/>
    <property type="match status" value="1"/>
</dbReference>
<dbReference type="PROSITE" id="PS00905">
    <property type="entry name" value="GTP1_OBG"/>
    <property type="match status" value="1"/>
</dbReference>
<dbReference type="PROSITE" id="PS51883">
    <property type="entry name" value="OBG"/>
    <property type="match status" value="1"/>
</dbReference>
<gene>
    <name evidence="1" type="primary">obg</name>
    <name type="ordered locus">PSPPH_0715</name>
</gene>
<reference key="1">
    <citation type="journal article" date="2005" name="J. Bacteriol.">
        <title>Whole-genome sequence analysis of Pseudomonas syringae pv. phaseolicola 1448A reveals divergence among pathovars in genes involved in virulence and transposition.</title>
        <authorList>
            <person name="Joardar V."/>
            <person name="Lindeberg M."/>
            <person name="Jackson R.W."/>
            <person name="Selengut J."/>
            <person name="Dodson R."/>
            <person name="Brinkac L.M."/>
            <person name="Daugherty S.C."/>
            <person name="DeBoy R.T."/>
            <person name="Durkin A.S."/>
            <person name="Gwinn Giglio M."/>
            <person name="Madupu R."/>
            <person name="Nelson W.C."/>
            <person name="Rosovitz M.J."/>
            <person name="Sullivan S.A."/>
            <person name="Crabtree J."/>
            <person name="Creasy T."/>
            <person name="Davidsen T.M."/>
            <person name="Haft D.H."/>
            <person name="Zafar N."/>
            <person name="Zhou L."/>
            <person name="Halpin R."/>
            <person name="Holley T."/>
            <person name="Khouri H.M."/>
            <person name="Feldblyum T.V."/>
            <person name="White O."/>
            <person name="Fraser C.M."/>
            <person name="Chatterjee A.K."/>
            <person name="Cartinhour S."/>
            <person name="Schneider D."/>
            <person name="Mansfield J.W."/>
            <person name="Collmer A."/>
            <person name="Buell R."/>
        </authorList>
    </citation>
    <scope>NUCLEOTIDE SEQUENCE [LARGE SCALE GENOMIC DNA]</scope>
    <source>
        <strain>1448A / Race 6</strain>
    </source>
</reference>
<name>OBG_PSE14</name>
<comment type="function">
    <text evidence="1">An essential GTPase which binds GTP, GDP and possibly (p)ppGpp with moderate affinity, with high nucleotide exchange rates and a fairly low GTP hydrolysis rate. Plays a role in control of the cell cycle, stress response, ribosome biogenesis and in those bacteria that undergo differentiation, in morphogenesis control.</text>
</comment>
<comment type="cofactor">
    <cofactor evidence="1">
        <name>Mg(2+)</name>
        <dbReference type="ChEBI" id="CHEBI:18420"/>
    </cofactor>
</comment>
<comment type="subunit">
    <text evidence="1">Monomer.</text>
</comment>
<comment type="subcellular location">
    <subcellularLocation>
        <location evidence="1">Cytoplasm</location>
    </subcellularLocation>
</comment>
<comment type="similarity">
    <text evidence="1">Belongs to the TRAFAC class OBG-HflX-like GTPase superfamily. OBG GTPase family.</text>
</comment>
<sequence>MKFVDEVSIRVKAGDGGNGCMSFRREKFIENGGPNGGDGGDGGSIFMVADVNLNTLVDYRYTRHFDAERGSNGGSADCTGRKGEELVLRVPVGTTIIDATTQEIIGDLTKDGQRLMVAQGGWHGLGNTRFKSSTNRAPRQTTPGKPGDQRDLKLELKVLADVGLLGLPNAGKSTFIRSVSAAKPKVADYPFTTLVPNLGVVSVDRWKSFVVADIPGLIEGASDGAGLGIRFLKHLARTRLLLHLVDMAPLDESSAPDAAEVIVNELEKFSPSLAERDRWLVLNKCDQILEEEQEARKQEIVDRLEWTGPVYVISAIAKEGTEQLTRDIMRYLEERSQRIAEEPGYAEELAELDQRIEDEARAQLQALDDQRALRRSGVKSVHDIGDDDWDEEDVDDEDGPEIIYVRD</sequence>
<feature type="chain" id="PRO_0000386163" description="GTPase Obg">
    <location>
        <begin position="1"/>
        <end position="407"/>
    </location>
</feature>
<feature type="domain" description="Obg" evidence="2">
    <location>
        <begin position="1"/>
        <end position="159"/>
    </location>
</feature>
<feature type="domain" description="OBG-type G" evidence="1">
    <location>
        <begin position="160"/>
        <end position="333"/>
    </location>
</feature>
<feature type="region of interest" description="Disordered" evidence="3">
    <location>
        <begin position="127"/>
        <end position="149"/>
    </location>
</feature>
<feature type="region of interest" description="Disordered" evidence="3">
    <location>
        <begin position="376"/>
        <end position="407"/>
    </location>
</feature>
<feature type="compositionally biased region" description="Polar residues" evidence="3">
    <location>
        <begin position="129"/>
        <end position="143"/>
    </location>
</feature>
<feature type="compositionally biased region" description="Acidic residues" evidence="3">
    <location>
        <begin position="385"/>
        <end position="400"/>
    </location>
</feature>
<feature type="binding site" evidence="1">
    <location>
        <begin position="166"/>
        <end position="173"/>
    </location>
    <ligand>
        <name>GTP</name>
        <dbReference type="ChEBI" id="CHEBI:37565"/>
    </ligand>
</feature>
<feature type="binding site" evidence="1">
    <location>
        <position position="173"/>
    </location>
    <ligand>
        <name>Mg(2+)</name>
        <dbReference type="ChEBI" id="CHEBI:18420"/>
    </ligand>
</feature>
<feature type="binding site" evidence="1">
    <location>
        <begin position="191"/>
        <end position="195"/>
    </location>
    <ligand>
        <name>GTP</name>
        <dbReference type="ChEBI" id="CHEBI:37565"/>
    </ligand>
</feature>
<feature type="binding site" evidence="1">
    <location>
        <position position="193"/>
    </location>
    <ligand>
        <name>Mg(2+)</name>
        <dbReference type="ChEBI" id="CHEBI:18420"/>
    </ligand>
</feature>
<feature type="binding site" evidence="1">
    <location>
        <begin position="213"/>
        <end position="216"/>
    </location>
    <ligand>
        <name>GTP</name>
        <dbReference type="ChEBI" id="CHEBI:37565"/>
    </ligand>
</feature>
<feature type="binding site" evidence="1">
    <location>
        <begin position="283"/>
        <end position="286"/>
    </location>
    <ligand>
        <name>GTP</name>
        <dbReference type="ChEBI" id="CHEBI:37565"/>
    </ligand>
</feature>
<feature type="binding site" evidence="1">
    <location>
        <begin position="314"/>
        <end position="316"/>
    </location>
    <ligand>
        <name>GTP</name>
        <dbReference type="ChEBI" id="CHEBI:37565"/>
    </ligand>
</feature>
<keyword id="KW-0963">Cytoplasm</keyword>
<keyword id="KW-0342">GTP-binding</keyword>
<keyword id="KW-0378">Hydrolase</keyword>
<keyword id="KW-0460">Magnesium</keyword>
<keyword id="KW-0479">Metal-binding</keyword>
<keyword id="KW-0547">Nucleotide-binding</keyword>
<accession>Q48NL2</accession>